<keyword id="KW-0106">Calcium</keyword>
<keyword id="KW-0378">Hydrolase</keyword>
<keyword id="KW-0479">Metal-binding</keyword>
<keyword id="KW-0482">Metalloprotease</keyword>
<keyword id="KW-0645">Protease</keyword>
<keyword id="KW-0964">Secreted</keyword>
<keyword id="KW-0732">Signal</keyword>
<keyword id="KW-0862">Zinc</keyword>
<keyword id="KW-0865">Zymogen</keyword>
<gene>
    <name type="primary">sepA</name>
    <name type="ordered locus">SE_2219</name>
</gene>
<evidence type="ECO:0000250" key="1"/>
<evidence type="ECO:0000255" key="2"/>
<evidence type="ECO:0000255" key="3">
    <source>
        <dbReference type="PROSITE-ProRule" id="PRU10095"/>
    </source>
</evidence>
<evidence type="ECO:0000305" key="4"/>
<proteinExistence type="inferred from homology"/>
<accession>P0C0Q4</accession>
<accession>P43148</accession>
<dbReference type="EC" id="3.4.24.-"/>
<dbReference type="EMBL" id="AE015929">
    <property type="protein sequence ID" value="AAO05861.1"/>
    <property type="molecule type" value="Genomic_DNA"/>
</dbReference>
<dbReference type="RefSeq" id="NP_765774.1">
    <property type="nucleotide sequence ID" value="NC_004461.1"/>
</dbReference>
<dbReference type="RefSeq" id="WP_002456744.1">
    <property type="nucleotide sequence ID" value="NZ_WBME01000025.1"/>
</dbReference>
<dbReference type="SMR" id="P0C0Q4"/>
<dbReference type="MEROPS" id="M04.009"/>
<dbReference type="KEGG" id="sep:SE_2219"/>
<dbReference type="PATRIC" id="fig|176280.10.peg.2166"/>
<dbReference type="eggNOG" id="COG3227">
    <property type="taxonomic scope" value="Bacteria"/>
</dbReference>
<dbReference type="HOGENOM" id="CLU_008590_5_2_9"/>
<dbReference type="OrthoDB" id="291295at2"/>
<dbReference type="Proteomes" id="UP000001411">
    <property type="component" value="Chromosome"/>
</dbReference>
<dbReference type="GO" id="GO:0005576">
    <property type="term" value="C:extracellular region"/>
    <property type="evidence" value="ECO:0007669"/>
    <property type="project" value="UniProtKB-SubCell"/>
</dbReference>
<dbReference type="GO" id="GO:0046872">
    <property type="term" value="F:metal ion binding"/>
    <property type="evidence" value="ECO:0007669"/>
    <property type="project" value="UniProtKB-KW"/>
</dbReference>
<dbReference type="GO" id="GO:0004222">
    <property type="term" value="F:metalloendopeptidase activity"/>
    <property type="evidence" value="ECO:0007669"/>
    <property type="project" value="InterPro"/>
</dbReference>
<dbReference type="GO" id="GO:0006508">
    <property type="term" value="P:proteolysis"/>
    <property type="evidence" value="ECO:0007669"/>
    <property type="project" value="UniProtKB-KW"/>
</dbReference>
<dbReference type="CDD" id="cd09597">
    <property type="entry name" value="M4_TLP"/>
    <property type="match status" value="1"/>
</dbReference>
<dbReference type="Gene3D" id="3.10.170.10">
    <property type="match status" value="1"/>
</dbReference>
<dbReference type="Gene3D" id="3.10.450.40">
    <property type="match status" value="1"/>
</dbReference>
<dbReference type="Gene3D" id="1.10.390.10">
    <property type="entry name" value="Neutral Protease Domain 2"/>
    <property type="match status" value="1"/>
</dbReference>
<dbReference type="InterPro" id="IPR011096">
    <property type="entry name" value="FTP_domain"/>
</dbReference>
<dbReference type="InterPro" id="IPR025711">
    <property type="entry name" value="PepSY"/>
</dbReference>
<dbReference type="InterPro" id="IPR023612">
    <property type="entry name" value="Peptidase_M4"/>
</dbReference>
<dbReference type="InterPro" id="IPR027268">
    <property type="entry name" value="Peptidase_M4/M1_CTD_sf"/>
</dbReference>
<dbReference type="InterPro" id="IPR001570">
    <property type="entry name" value="Peptidase_M4_C_domain"/>
</dbReference>
<dbReference type="InterPro" id="IPR013856">
    <property type="entry name" value="Peptidase_M4_domain"/>
</dbReference>
<dbReference type="InterPro" id="IPR050728">
    <property type="entry name" value="Zinc_Metalloprotease_M4"/>
</dbReference>
<dbReference type="PANTHER" id="PTHR33794">
    <property type="entry name" value="BACILLOLYSIN"/>
    <property type="match status" value="1"/>
</dbReference>
<dbReference type="PANTHER" id="PTHR33794:SF1">
    <property type="entry name" value="BACILLOLYSIN"/>
    <property type="match status" value="1"/>
</dbReference>
<dbReference type="Pfam" id="PF07504">
    <property type="entry name" value="FTP"/>
    <property type="match status" value="1"/>
</dbReference>
<dbReference type="Pfam" id="PF03413">
    <property type="entry name" value="PepSY"/>
    <property type="match status" value="1"/>
</dbReference>
<dbReference type="Pfam" id="PF01447">
    <property type="entry name" value="Peptidase_M4"/>
    <property type="match status" value="1"/>
</dbReference>
<dbReference type="Pfam" id="PF02868">
    <property type="entry name" value="Peptidase_M4_C"/>
    <property type="match status" value="1"/>
</dbReference>
<dbReference type="PRINTS" id="PR00730">
    <property type="entry name" value="THERMOLYSIN"/>
</dbReference>
<dbReference type="SUPFAM" id="SSF55486">
    <property type="entry name" value="Metalloproteases ('zincins'), catalytic domain"/>
    <property type="match status" value="1"/>
</dbReference>
<dbReference type="PROSITE" id="PS00142">
    <property type="entry name" value="ZINC_PROTEASE"/>
    <property type="match status" value="1"/>
</dbReference>
<comment type="function">
    <text evidence="1">Protease that has a low substrate specificity. Glucagon is preferentially cleaved between aromatic (Phe) and hydrophobic (Val) amino acids. Hydrolyzes casein and elastin (By similarity).</text>
</comment>
<comment type="cofactor">
    <cofactor evidence="1">
        <name>Ca(2+)</name>
        <dbReference type="ChEBI" id="CHEBI:29108"/>
    </cofactor>
    <text evidence="1">Binds 3 Ca(2+) ions per subunit.</text>
</comment>
<comment type="cofactor">
    <cofactor evidence="1">
        <name>Zn(2+)</name>
        <dbReference type="ChEBI" id="CHEBI:29105"/>
    </cofactor>
    <text evidence="1">Binds 1 zinc ion per subunit.</text>
</comment>
<comment type="subcellular location">
    <subcellularLocation>
        <location evidence="1">Secreted</location>
    </subcellularLocation>
</comment>
<comment type="similarity">
    <text evidence="4">Belongs to the peptidase M4 family.</text>
</comment>
<sequence length="507" mass="55787">MKNFSKFALTSIAALTVASPLVNTEVDAKDKVSATQNIDAKVTQESQATNALKELPKSENIKKHYKDYKVTDTEKDNKGFTHYTLQPKVGNTYAPDKEVKVHTNKEGKVVLVNGDTDAKKVQPTNKVAISKESATDKAFEAIKIDRQKAKNLKSDVIKTNKVEIDGEKNKYVYNIEIITTSPKISHWNVKIDAETGQVVDKLNMIKEAATTGTGKGVLGDTKQININSVSGGYALQDLTQQGTLSAYNYDANTGQAYLMQDKDKNFVDDEQRAGVDANYYAKETYDYYKNTFGRESYDNQGSPIISIAHVNNFQGQDNRNNAAWIGDKMIYGDGDGRTFTALSGANDVVAHEITHGVTQQTANLVYRSQSGALNESFSDVFGYFIDDEDFLMGEDVYTPGVGGDALRSMSNPERFGQPSHMNDFVYTNSDNGGVHTNSGIPNKAAYNTIRSIGKQRSEQIYYRALTVYLTSNSDFQDAKASLQQAAFDLYGDGIAQQVGQAWDSVGV</sequence>
<reference key="1">
    <citation type="journal article" date="2003" name="Mol. Microbiol.">
        <title>Genome-based analysis of virulence genes in a non-biofilm-forming Staphylococcus epidermidis strain (ATCC 12228).</title>
        <authorList>
            <person name="Zhang Y.-Q."/>
            <person name="Ren S.-X."/>
            <person name="Li H.-L."/>
            <person name="Wang Y.-X."/>
            <person name="Fu G."/>
            <person name="Yang J."/>
            <person name="Qin Z.-Q."/>
            <person name="Miao Y.-G."/>
            <person name="Wang W.-Y."/>
            <person name="Chen R.-S."/>
            <person name="Shen Y."/>
            <person name="Chen Z."/>
            <person name="Yuan Z.-H."/>
            <person name="Zhao G.-P."/>
            <person name="Qu D."/>
            <person name="Danchin A."/>
            <person name="Wen Y.-M."/>
        </authorList>
    </citation>
    <scope>NUCLEOTIDE SEQUENCE [LARGE SCALE GENOMIC DNA]</scope>
    <source>
        <strain>ATCC 12228 / FDA PCI 1200</strain>
    </source>
</reference>
<protein>
    <recommendedName>
        <fullName>Extracellular elastase</fullName>
        <ecNumber>3.4.24.-</ecNumber>
    </recommendedName>
    <alternativeName>
        <fullName>SEPP1</fullName>
    </alternativeName>
</protein>
<feature type="signal peptide" evidence="2">
    <location>
        <begin position="1"/>
        <end position="28"/>
    </location>
</feature>
<feature type="propeptide" id="PRO_0000042923" evidence="1">
    <location>
        <begin position="29"/>
        <end position="207"/>
    </location>
</feature>
<feature type="chain" id="PRO_0000042924" description="Extracellular elastase">
    <location>
        <begin position="208"/>
        <end position="507"/>
    </location>
</feature>
<feature type="active site" evidence="3">
    <location>
        <position position="352"/>
    </location>
</feature>
<feature type="active site" description="Proton donor" evidence="3">
    <location>
        <position position="435"/>
    </location>
</feature>
<feature type="binding site" evidence="1">
    <location>
        <position position="347"/>
    </location>
    <ligand>
        <name>Ca(2+)</name>
        <dbReference type="ChEBI" id="CHEBI:29108"/>
        <label>1</label>
    </ligand>
</feature>
<feature type="binding site" evidence="3">
    <location>
        <position position="351"/>
    </location>
    <ligand>
        <name>Zn(2+)</name>
        <dbReference type="ChEBI" id="CHEBI:29105"/>
        <note>catalytic</note>
    </ligand>
</feature>
<feature type="binding site" evidence="3">
    <location>
        <position position="355"/>
    </location>
    <ligand>
        <name>Zn(2+)</name>
        <dbReference type="ChEBI" id="CHEBI:29105"/>
        <note>catalytic</note>
    </ligand>
</feature>
<feature type="binding site" evidence="3">
    <location>
        <position position="375"/>
    </location>
    <ligand>
        <name>Zn(2+)</name>
        <dbReference type="ChEBI" id="CHEBI:29105"/>
        <note>catalytic</note>
    </ligand>
</feature>
<feature type="binding site" evidence="1">
    <location>
        <position position="386"/>
    </location>
    <ligand>
        <name>Ca(2+)</name>
        <dbReference type="ChEBI" id="CHEBI:29108"/>
        <label>1</label>
    </ligand>
</feature>
<feature type="binding site" evidence="1">
    <location>
        <position position="386"/>
    </location>
    <ligand>
        <name>Ca(2+)</name>
        <dbReference type="ChEBI" id="CHEBI:29108"/>
        <label>2</label>
    </ligand>
</feature>
<feature type="binding site" evidence="1">
    <location>
        <position position="388"/>
    </location>
    <ligand>
        <name>Ca(2+)</name>
        <dbReference type="ChEBI" id="CHEBI:29108"/>
        <label>2</label>
    </ligand>
</feature>
<feature type="binding site" evidence="1">
    <location>
        <position position="389"/>
    </location>
    <ligand>
        <name>Ca(2+)</name>
        <dbReference type="ChEBI" id="CHEBI:29108"/>
        <label>1</label>
    </ligand>
</feature>
<feature type="binding site" evidence="1">
    <location>
        <position position="389"/>
    </location>
    <ligand>
        <name>Ca(2+)</name>
        <dbReference type="ChEBI" id="CHEBI:29108"/>
        <label>2</label>
    </ligand>
</feature>
<feature type="binding site" evidence="1">
    <location>
        <position position="391"/>
    </location>
    <ligand>
        <name>Ca(2+)</name>
        <dbReference type="ChEBI" id="CHEBI:29108"/>
        <label>1</label>
    </ligand>
</feature>
<feature type="binding site" evidence="1">
    <location>
        <position position="394"/>
    </location>
    <ligand>
        <name>Ca(2+)</name>
        <dbReference type="ChEBI" id="CHEBI:29108"/>
        <label>1</label>
    </ligand>
</feature>
<feature type="binding site" evidence="1">
    <location>
        <position position="394"/>
    </location>
    <ligand>
        <name>Ca(2+)</name>
        <dbReference type="ChEBI" id="CHEBI:29108"/>
        <label>2</label>
    </ligand>
</feature>
<feature type="binding site" evidence="1">
    <location>
        <position position="397"/>
    </location>
    <ligand>
        <name>Ca(2+)</name>
        <dbReference type="ChEBI" id="CHEBI:29108"/>
        <label>3</label>
    </ligand>
</feature>
<feature type="binding site" evidence="1">
    <location>
        <position position="398"/>
    </location>
    <ligand>
        <name>Ca(2+)</name>
        <dbReference type="ChEBI" id="CHEBI:29108"/>
        <label>3</label>
    </ligand>
</feature>
<feature type="binding site" evidence="1">
    <location>
        <position position="401"/>
    </location>
    <ligand>
        <name>Ca(2+)</name>
        <dbReference type="ChEBI" id="CHEBI:29108"/>
        <label>3</label>
    </ligand>
</feature>
<feature type="binding site" evidence="1">
    <location>
        <position position="404"/>
    </location>
    <ligand>
        <name>Ca(2+)</name>
        <dbReference type="ChEBI" id="CHEBI:29108"/>
        <label>3</label>
    </ligand>
</feature>
<organism>
    <name type="scientific">Staphylococcus epidermidis (strain ATCC 12228 / FDA PCI 1200)</name>
    <dbReference type="NCBI Taxonomy" id="176280"/>
    <lineage>
        <taxon>Bacteria</taxon>
        <taxon>Bacillati</taxon>
        <taxon>Bacillota</taxon>
        <taxon>Bacilli</taxon>
        <taxon>Bacillales</taxon>
        <taxon>Staphylococcaceae</taxon>
        <taxon>Staphylococcus</taxon>
    </lineage>
</organism>
<name>SEPA_STAES</name>